<gene>
    <name evidence="1" type="primary">serS</name>
    <name type="ordered locus">BMASAVP1_A0794</name>
</gene>
<comment type="function">
    <text evidence="1">Catalyzes the attachment of serine to tRNA(Ser). Is also able to aminoacylate tRNA(Sec) with serine, to form the misacylated tRNA L-seryl-tRNA(Sec), which will be further converted into selenocysteinyl-tRNA(Sec).</text>
</comment>
<comment type="catalytic activity">
    <reaction evidence="1">
        <text>tRNA(Ser) + L-serine + ATP = L-seryl-tRNA(Ser) + AMP + diphosphate + H(+)</text>
        <dbReference type="Rhea" id="RHEA:12292"/>
        <dbReference type="Rhea" id="RHEA-COMP:9669"/>
        <dbReference type="Rhea" id="RHEA-COMP:9703"/>
        <dbReference type="ChEBI" id="CHEBI:15378"/>
        <dbReference type="ChEBI" id="CHEBI:30616"/>
        <dbReference type="ChEBI" id="CHEBI:33019"/>
        <dbReference type="ChEBI" id="CHEBI:33384"/>
        <dbReference type="ChEBI" id="CHEBI:78442"/>
        <dbReference type="ChEBI" id="CHEBI:78533"/>
        <dbReference type="ChEBI" id="CHEBI:456215"/>
        <dbReference type="EC" id="6.1.1.11"/>
    </reaction>
</comment>
<comment type="catalytic activity">
    <reaction evidence="1">
        <text>tRNA(Sec) + L-serine + ATP = L-seryl-tRNA(Sec) + AMP + diphosphate + H(+)</text>
        <dbReference type="Rhea" id="RHEA:42580"/>
        <dbReference type="Rhea" id="RHEA-COMP:9742"/>
        <dbReference type="Rhea" id="RHEA-COMP:10128"/>
        <dbReference type="ChEBI" id="CHEBI:15378"/>
        <dbReference type="ChEBI" id="CHEBI:30616"/>
        <dbReference type="ChEBI" id="CHEBI:33019"/>
        <dbReference type="ChEBI" id="CHEBI:33384"/>
        <dbReference type="ChEBI" id="CHEBI:78442"/>
        <dbReference type="ChEBI" id="CHEBI:78533"/>
        <dbReference type="ChEBI" id="CHEBI:456215"/>
        <dbReference type="EC" id="6.1.1.11"/>
    </reaction>
</comment>
<comment type="pathway">
    <text evidence="1">Aminoacyl-tRNA biosynthesis; selenocysteinyl-tRNA(Sec) biosynthesis; L-seryl-tRNA(Sec) from L-serine and tRNA(Sec): step 1/1.</text>
</comment>
<comment type="subunit">
    <text evidence="1">Homodimer. The tRNA molecule binds across the dimer.</text>
</comment>
<comment type="subcellular location">
    <subcellularLocation>
        <location evidence="1">Cytoplasm</location>
    </subcellularLocation>
</comment>
<comment type="domain">
    <text evidence="1">Consists of two distinct domains, a catalytic core and a N-terminal extension that is involved in tRNA binding.</text>
</comment>
<comment type="similarity">
    <text evidence="1">Belongs to the class-II aminoacyl-tRNA synthetase family. Type-1 seryl-tRNA synthetase subfamily.</text>
</comment>
<name>SYS_BURMS</name>
<feature type="chain" id="PRO_1000019631" description="Serine--tRNA ligase">
    <location>
        <begin position="1"/>
        <end position="433"/>
    </location>
</feature>
<feature type="binding site" evidence="1">
    <location>
        <begin position="235"/>
        <end position="237"/>
    </location>
    <ligand>
        <name>L-serine</name>
        <dbReference type="ChEBI" id="CHEBI:33384"/>
    </ligand>
</feature>
<feature type="binding site" evidence="1">
    <location>
        <begin position="266"/>
        <end position="268"/>
    </location>
    <ligand>
        <name>ATP</name>
        <dbReference type="ChEBI" id="CHEBI:30616"/>
    </ligand>
</feature>
<feature type="binding site" evidence="1">
    <location>
        <position position="289"/>
    </location>
    <ligand>
        <name>L-serine</name>
        <dbReference type="ChEBI" id="CHEBI:33384"/>
    </ligand>
</feature>
<feature type="binding site" evidence="1">
    <location>
        <begin position="353"/>
        <end position="356"/>
    </location>
    <ligand>
        <name>ATP</name>
        <dbReference type="ChEBI" id="CHEBI:30616"/>
    </ligand>
</feature>
<feature type="binding site" evidence="1">
    <location>
        <position position="388"/>
    </location>
    <ligand>
        <name>L-serine</name>
        <dbReference type="ChEBI" id="CHEBI:33384"/>
    </ligand>
</feature>
<organism>
    <name type="scientific">Burkholderia mallei (strain SAVP1)</name>
    <dbReference type="NCBI Taxonomy" id="320388"/>
    <lineage>
        <taxon>Bacteria</taxon>
        <taxon>Pseudomonadati</taxon>
        <taxon>Pseudomonadota</taxon>
        <taxon>Betaproteobacteria</taxon>
        <taxon>Burkholderiales</taxon>
        <taxon>Burkholderiaceae</taxon>
        <taxon>Burkholderia</taxon>
        <taxon>pseudomallei group</taxon>
    </lineage>
</organism>
<sequence length="433" mass="47607">MLDIQLLRKDLDGVAKRLADRGYPLDVAAFSALEAERRAIQTRTEELQARRNSLSKQIGAMKGRGEDTSAVMAEVGGIGDEMKASAVKLDEIQARLSELMLEMPNVPHESVPVGRDETENVEVRRWGAPRQFDFDVKDHVDVGTPLGLDFETGAKLSGARFTVLRGPIARLHRALAQFMLDTHTQQHGYSETYTPYIVNPDVLYGTGQLPKFAEDMFRVEKGGAENTVTQYLISTSEISLTNTVRDSIVEASALPIKLTAHSPCFRSEAGSYGRDTRGMIRQHQFDKVEMVQIVAPEASYAALDEMVGHAEAILQKLELPYRVVALCTGDMGFSAAKTFDLEVWLPAQNTYREISSCSNTESFQARRMQARFRNAQGKPELVHTLNGSGLAVGRTLVAVLENYQNADGSVTVPVALRPYMGGVERIDAPSSAA</sequence>
<reference key="1">
    <citation type="journal article" date="2010" name="Genome Biol. Evol.">
        <title>Continuing evolution of Burkholderia mallei through genome reduction and large-scale rearrangements.</title>
        <authorList>
            <person name="Losada L."/>
            <person name="Ronning C.M."/>
            <person name="DeShazer D."/>
            <person name="Woods D."/>
            <person name="Fedorova N."/>
            <person name="Kim H.S."/>
            <person name="Shabalina S.A."/>
            <person name="Pearson T.R."/>
            <person name="Brinkac L."/>
            <person name="Tan P."/>
            <person name="Nandi T."/>
            <person name="Crabtree J."/>
            <person name="Badger J."/>
            <person name="Beckstrom-Sternberg S."/>
            <person name="Saqib M."/>
            <person name="Schutzer S.E."/>
            <person name="Keim P."/>
            <person name="Nierman W.C."/>
        </authorList>
    </citation>
    <scope>NUCLEOTIDE SEQUENCE [LARGE SCALE GENOMIC DNA]</scope>
    <source>
        <strain>SAVP1</strain>
    </source>
</reference>
<proteinExistence type="inferred from homology"/>
<keyword id="KW-0030">Aminoacyl-tRNA synthetase</keyword>
<keyword id="KW-0067">ATP-binding</keyword>
<keyword id="KW-0963">Cytoplasm</keyword>
<keyword id="KW-0436">Ligase</keyword>
<keyword id="KW-0547">Nucleotide-binding</keyword>
<keyword id="KW-0648">Protein biosynthesis</keyword>
<protein>
    <recommendedName>
        <fullName evidence="1">Serine--tRNA ligase</fullName>
        <ecNumber evidence="1">6.1.1.11</ecNumber>
    </recommendedName>
    <alternativeName>
        <fullName evidence="1">Seryl-tRNA synthetase</fullName>
        <shortName evidence="1">SerRS</shortName>
    </alternativeName>
    <alternativeName>
        <fullName evidence="1">Seryl-tRNA(Ser/Sec) synthetase</fullName>
    </alternativeName>
</protein>
<accession>A1V1N6</accession>
<evidence type="ECO:0000255" key="1">
    <source>
        <dbReference type="HAMAP-Rule" id="MF_00176"/>
    </source>
</evidence>
<dbReference type="EC" id="6.1.1.11" evidence="1"/>
<dbReference type="EMBL" id="CP000526">
    <property type="protein sequence ID" value="ABM50506.1"/>
    <property type="molecule type" value="Genomic_DNA"/>
</dbReference>
<dbReference type="RefSeq" id="WP_004186129.1">
    <property type="nucleotide sequence ID" value="NC_008785.1"/>
</dbReference>
<dbReference type="SMR" id="A1V1N6"/>
<dbReference type="GeneID" id="93061177"/>
<dbReference type="KEGG" id="bmv:BMASAVP1_A0794"/>
<dbReference type="HOGENOM" id="CLU_023797_1_1_4"/>
<dbReference type="UniPathway" id="UPA00906">
    <property type="reaction ID" value="UER00895"/>
</dbReference>
<dbReference type="GO" id="GO:0005737">
    <property type="term" value="C:cytoplasm"/>
    <property type="evidence" value="ECO:0007669"/>
    <property type="project" value="UniProtKB-SubCell"/>
</dbReference>
<dbReference type="GO" id="GO:0005524">
    <property type="term" value="F:ATP binding"/>
    <property type="evidence" value="ECO:0007669"/>
    <property type="project" value="UniProtKB-UniRule"/>
</dbReference>
<dbReference type="GO" id="GO:0004828">
    <property type="term" value="F:serine-tRNA ligase activity"/>
    <property type="evidence" value="ECO:0007669"/>
    <property type="project" value="UniProtKB-UniRule"/>
</dbReference>
<dbReference type="GO" id="GO:0016260">
    <property type="term" value="P:selenocysteine biosynthetic process"/>
    <property type="evidence" value="ECO:0007669"/>
    <property type="project" value="UniProtKB-UniRule"/>
</dbReference>
<dbReference type="GO" id="GO:0006434">
    <property type="term" value="P:seryl-tRNA aminoacylation"/>
    <property type="evidence" value="ECO:0007669"/>
    <property type="project" value="UniProtKB-UniRule"/>
</dbReference>
<dbReference type="CDD" id="cd00770">
    <property type="entry name" value="SerRS_core"/>
    <property type="match status" value="1"/>
</dbReference>
<dbReference type="Gene3D" id="3.30.930.10">
    <property type="entry name" value="Bira Bifunctional Protein, Domain 2"/>
    <property type="match status" value="1"/>
</dbReference>
<dbReference type="Gene3D" id="1.10.287.40">
    <property type="entry name" value="Serine-tRNA synthetase, tRNA binding domain"/>
    <property type="match status" value="1"/>
</dbReference>
<dbReference type="HAMAP" id="MF_00176">
    <property type="entry name" value="Ser_tRNA_synth_type1"/>
    <property type="match status" value="1"/>
</dbReference>
<dbReference type="InterPro" id="IPR002314">
    <property type="entry name" value="aa-tRNA-synt_IIb"/>
</dbReference>
<dbReference type="InterPro" id="IPR006195">
    <property type="entry name" value="aa-tRNA-synth_II"/>
</dbReference>
<dbReference type="InterPro" id="IPR045864">
    <property type="entry name" value="aa-tRNA-synth_II/BPL/LPL"/>
</dbReference>
<dbReference type="InterPro" id="IPR002317">
    <property type="entry name" value="Ser-tRNA-ligase_type_1"/>
</dbReference>
<dbReference type="InterPro" id="IPR015866">
    <property type="entry name" value="Ser-tRNA-synth_1_N"/>
</dbReference>
<dbReference type="InterPro" id="IPR042103">
    <property type="entry name" value="SerRS_1_N_sf"/>
</dbReference>
<dbReference type="InterPro" id="IPR033729">
    <property type="entry name" value="SerRS_core"/>
</dbReference>
<dbReference type="InterPro" id="IPR010978">
    <property type="entry name" value="tRNA-bd_arm"/>
</dbReference>
<dbReference type="NCBIfam" id="TIGR00414">
    <property type="entry name" value="serS"/>
    <property type="match status" value="1"/>
</dbReference>
<dbReference type="PANTHER" id="PTHR43697:SF1">
    <property type="entry name" value="SERINE--TRNA LIGASE"/>
    <property type="match status" value="1"/>
</dbReference>
<dbReference type="PANTHER" id="PTHR43697">
    <property type="entry name" value="SERYL-TRNA SYNTHETASE"/>
    <property type="match status" value="1"/>
</dbReference>
<dbReference type="Pfam" id="PF02403">
    <property type="entry name" value="Seryl_tRNA_N"/>
    <property type="match status" value="1"/>
</dbReference>
<dbReference type="Pfam" id="PF00587">
    <property type="entry name" value="tRNA-synt_2b"/>
    <property type="match status" value="1"/>
</dbReference>
<dbReference type="PIRSF" id="PIRSF001529">
    <property type="entry name" value="Ser-tRNA-synth_IIa"/>
    <property type="match status" value="1"/>
</dbReference>
<dbReference type="PRINTS" id="PR00981">
    <property type="entry name" value="TRNASYNTHSER"/>
</dbReference>
<dbReference type="SUPFAM" id="SSF55681">
    <property type="entry name" value="Class II aaRS and biotin synthetases"/>
    <property type="match status" value="1"/>
</dbReference>
<dbReference type="SUPFAM" id="SSF46589">
    <property type="entry name" value="tRNA-binding arm"/>
    <property type="match status" value="1"/>
</dbReference>
<dbReference type="PROSITE" id="PS50862">
    <property type="entry name" value="AA_TRNA_LIGASE_II"/>
    <property type="match status" value="1"/>
</dbReference>